<sequence>MATMMAMSSFAGAAVLPRGSARSLPALGRRTLVVRAQTEGPNAPPPNKPKASTSIWDAMAFSGPAPERINGRLAMVGFVTALAVEAGRGDGLLSQLGSGTGQAWFAYTVAMLSMASLVPLLQGESAEGRAGAIMNANAELWNGRFAMIGLVALAATEIITGTPFINV</sequence>
<evidence type="ECO:0000255" key="1"/>
<evidence type="ECO:0000305" key="2"/>
<comment type="function">
    <text>Probably involved in the integration of pigments into the mature pigment-protein complexes.</text>
</comment>
<comment type="subcellular location">
    <subcellularLocation>
        <location evidence="2">Plastid</location>
        <location evidence="2">Chloroplast membrane</location>
        <topology evidence="2">Multi-pass membrane protein</topology>
    </subcellularLocation>
    <text>Associated with both photosystems I and II.</text>
</comment>
<comment type="developmental stage">
    <text>Appears transiently during greening of etiolated seedlings and disappears before chloroplast development is completed.</text>
</comment>
<comment type="induction">
    <text>By light.</text>
</comment>
<comment type="similarity">
    <text evidence="2">Belongs to the ELIP/psbS family.</text>
</comment>
<reference key="1">
    <citation type="journal article" date="1989" name="Plant Mol. Biol.">
        <title>Transiently expressed early light-inducible thylakoid proteins share transmembrane domains with light-harvesting chlorophyll binding proteins.</title>
        <authorList>
            <person name="Grimm B."/>
            <person name="Kruse E."/>
            <person name="Kloppstech K."/>
        </authorList>
    </citation>
    <scope>NUCLEOTIDE SEQUENCE [MRNA]</scope>
    <source>
        <strain>cv. Aramir</strain>
        <tissue>Leaf</tissue>
    </source>
</reference>
<accession>P14896</accession>
<name>ELI6_HORVU</name>
<protein>
    <recommendedName>
        <fullName>Low molecular mass early light-inducible protein HV60, chloroplastic</fullName>
        <shortName>ELIP</shortName>
    </recommendedName>
</protein>
<proteinExistence type="evidence at transcript level"/>
<keyword id="KW-0150">Chloroplast</keyword>
<keyword id="KW-0472">Membrane</keyword>
<keyword id="KW-0934">Plastid</keyword>
<keyword id="KW-0809">Transit peptide</keyword>
<keyword id="KW-0812">Transmembrane</keyword>
<keyword id="KW-1133">Transmembrane helix</keyword>
<dbReference type="EMBL" id="X15691">
    <property type="protein sequence ID" value="CAA33726.1"/>
    <property type="molecule type" value="mRNA"/>
</dbReference>
<dbReference type="PIR" id="S07473">
    <property type="entry name" value="S07473"/>
</dbReference>
<dbReference type="OMA" id="FAYTVAM"/>
<dbReference type="ExpressionAtlas" id="P14896">
    <property type="expression patterns" value="baseline and differential"/>
</dbReference>
<dbReference type="GO" id="GO:0031969">
    <property type="term" value="C:chloroplast membrane"/>
    <property type="evidence" value="ECO:0007669"/>
    <property type="project" value="UniProtKB-SubCell"/>
</dbReference>
<dbReference type="Gene3D" id="1.10.3460.10">
    <property type="entry name" value="Chlorophyll a/b binding protein domain"/>
    <property type="match status" value="1"/>
</dbReference>
<dbReference type="InterPro" id="IPR022796">
    <property type="entry name" value="Chloroa_b-bind"/>
</dbReference>
<dbReference type="PANTHER" id="PTHR14154">
    <property type="entry name" value="UPF0041 BRAIN PROTEIN 44-RELATED"/>
    <property type="match status" value="1"/>
</dbReference>
<dbReference type="Pfam" id="PF00504">
    <property type="entry name" value="Chloroa_b-bind"/>
    <property type="match status" value="1"/>
</dbReference>
<dbReference type="SUPFAM" id="SSF103511">
    <property type="entry name" value="Chlorophyll a-b binding protein"/>
    <property type="match status" value="1"/>
</dbReference>
<organism>
    <name type="scientific">Hordeum vulgare</name>
    <name type="common">Barley</name>
    <dbReference type="NCBI Taxonomy" id="4513"/>
    <lineage>
        <taxon>Eukaryota</taxon>
        <taxon>Viridiplantae</taxon>
        <taxon>Streptophyta</taxon>
        <taxon>Embryophyta</taxon>
        <taxon>Tracheophyta</taxon>
        <taxon>Spermatophyta</taxon>
        <taxon>Magnoliopsida</taxon>
        <taxon>Liliopsida</taxon>
        <taxon>Poales</taxon>
        <taxon>Poaceae</taxon>
        <taxon>BOP clade</taxon>
        <taxon>Pooideae</taxon>
        <taxon>Triticodae</taxon>
        <taxon>Triticeae</taxon>
        <taxon>Hordeinae</taxon>
        <taxon>Hordeum</taxon>
    </lineage>
</organism>
<feature type="transit peptide" description="Chloroplast">
    <location>
        <begin position="1"/>
        <end position="33"/>
    </location>
</feature>
<feature type="chain" id="PRO_0000007802" description="Low molecular mass early light-inducible protein HV60, chloroplastic">
    <location>
        <begin position="34"/>
        <end position="167"/>
    </location>
</feature>
<feature type="transmembrane region" description="Helical" evidence="1">
    <location>
        <begin position="101"/>
        <end position="121"/>
    </location>
</feature>
<feature type="transmembrane region" description="Helical" evidence="1">
    <location>
        <begin position="145"/>
        <end position="165"/>
    </location>
</feature>